<reference key="1">
    <citation type="journal article" date="2005" name="Nature">
        <title>Genome sequencing and analysis of Aspergillus oryzae.</title>
        <authorList>
            <person name="Machida M."/>
            <person name="Asai K."/>
            <person name="Sano M."/>
            <person name="Tanaka T."/>
            <person name="Kumagai T."/>
            <person name="Terai G."/>
            <person name="Kusumoto K."/>
            <person name="Arima T."/>
            <person name="Akita O."/>
            <person name="Kashiwagi Y."/>
            <person name="Abe K."/>
            <person name="Gomi K."/>
            <person name="Horiuchi H."/>
            <person name="Kitamoto K."/>
            <person name="Kobayashi T."/>
            <person name="Takeuchi M."/>
            <person name="Denning D.W."/>
            <person name="Galagan J.E."/>
            <person name="Nierman W.C."/>
            <person name="Yu J."/>
            <person name="Archer D.B."/>
            <person name="Bennett J.W."/>
            <person name="Bhatnagar D."/>
            <person name="Cleveland T.E."/>
            <person name="Fedorova N.D."/>
            <person name="Gotoh O."/>
            <person name="Horikawa H."/>
            <person name="Hosoyama A."/>
            <person name="Ichinomiya M."/>
            <person name="Igarashi R."/>
            <person name="Iwashita K."/>
            <person name="Juvvadi P.R."/>
            <person name="Kato M."/>
            <person name="Kato Y."/>
            <person name="Kin T."/>
            <person name="Kokubun A."/>
            <person name="Maeda H."/>
            <person name="Maeyama N."/>
            <person name="Maruyama J."/>
            <person name="Nagasaki H."/>
            <person name="Nakajima T."/>
            <person name="Oda K."/>
            <person name="Okada K."/>
            <person name="Paulsen I."/>
            <person name="Sakamoto K."/>
            <person name="Sawano T."/>
            <person name="Takahashi M."/>
            <person name="Takase K."/>
            <person name="Terabayashi Y."/>
            <person name="Wortman J.R."/>
            <person name="Yamada O."/>
            <person name="Yamagata Y."/>
            <person name="Anazawa H."/>
            <person name="Hata Y."/>
            <person name="Koide Y."/>
            <person name="Komori T."/>
            <person name="Koyama Y."/>
            <person name="Minetoki T."/>
            <person name="Suharnan S."/>
            <person name="Tanaka A."/>
            <person name="Isono K."/>
            <person name="Kuhara S."/>
            <person name="Ogasawara N."/>
            <person name="Kikuchi H."/>
        </authorList>
    </citation>
    <scope>NUCLEOTIDE SEQUENCE [LARGE SCALE GENOMIC DNA]</scope>
    <source>
        <strain>ATCC 42149 / RIB 40</strain>
    </source>
</reference>
<proteinExistence type="inferred from homology"/>
<organism>
    <name type="scientific">Aspergillus oryzae (strain ATCC 42149 / RIB 40)</name>
    <name type="common">Yellow koji mold</name>
    <dbReference type="NCBI Taxonomy" id="510516"/>
    <lineage>
        <taxon>Eukaryota</taxon>
        <taxon>Fungi</taxon>
        <taxon>Dikarya</taxon>
        <taxon>Ascomycota</taxon>
        <taxon>Pezizomycotina</taxon>
        <taxon>Eurotiomycetes</taxon>
        <taxon>Eurotiomycetidae</taxon>
        <taxon>Eurotiales</taxon>
        <taxon>Aspergillaceae</taxon>
        <taxon>Aspergillus</taxon>
        <taxon>Aspergillus subgen. Circumdati</taxon>
    </lineage>
</organism>
<keyword id="KW-0143">Chaperone</keyword>
<keyword id="KW-0539">Nucleus</keyword>
<keyword id="KW-1185">Reference proteome</keyword>
<sequence>MDDNNQATTLSNDPAVNAPDTATLGRDKGKATQDPAPTDTSMDEGESDESENEDIVKEDEDGGDDLAPIDSSNIISGRRTRGKTIDFVDAAQKLKDDEGEDDEDDEDFEP</sequence>
<comment type="function">
    <text evidence="1">Forms a chaperone-bound H2A.Z-H2B complex that acts as a source for SWR1 complex-dependent H2A to H2A.Z histone replacement in chromatin.</text>
</comment>
<comment type="subunit">
    <text evidence="1">Forms a heterotrimer with H2A.Z-H2B, stabilizing the association of the histone dimer. Also, with a lower affinity, forms a heterotrimer with H2A-H2B (By similarity).</text>
</comment>
<comment type="subcellular location">
    <subcellularLocation>
        <location evidence="1">Nucleus</location>
    </subcellularLocation>
</comment>
<comment type="similarity">
    <text evidence="3">Belongs to the CHZ1 family.</text>
</comment>
<gene>
    <name type="primary">chz1</name>
    <name type="ORF">AO090012000994</name>
</gene>
<name>CHZ1_ASPOR</name>
<protein>
    <recommendedName>
        <fullName>Histone H2A.Z-specific chaperone chz1</fullName>
    </recommendedName>
</protein>
<feature type="chain" id="PRO_0000330202" description="Histone H2A.Z-specific chaperone chz1">
    <location>
        <begin position="1"/>
        <end position="110"/>
    </location>
</feature>
<feature type="region of interest" description="Disordered" evidence="2">
    <location>
        <begin position="1"/>
        <end position="110"/>
    </location>
</feature>
<feature type="compositionally biased region" description="Polar residues" evidence="2">
    <location>
        <begin position="1"/>
        <end position="14"/>
    </location>
</feature>
<feature type="compositionally biased region" description="Acidic residues" evidence="2">
    <location>
        <begin position="41"/>
        <end position="64"/>
    </location>
</feature>
<feature type="compositionally biased region" description="Acidic residues" evidence="2">
    <location>
        <begin position="97"/>
        <end position="110"/>
    </location>
</feature>
<accession>Q2UBH8</accession>
<evidence type="ECO:0000250" key="1"/>
<evidence type="ECO:0000256" key="2">
    <source>
        <dbReference type="SAM" id="MobiDB-lite"/>
    </source>
</evidence>
<evidence type="ECO:0000305" key="3"/>
<dbReference type="EMBL" id="BA000052">
    <property type="protein sequence ID" value="BAE61087.1"/>
    <property type="molecule type" value="Genomic_DNA"/>
</dbReference>
<dbReference type="SMR" id="Q2UBH8"/>
<dbReference type="STRING" id="510516.Q2UBH8"/>
<dbReference type="EnsemblFungi" id="BAE61087">
    <property type="protein sequence ID" value="BAE61087"/>
    <property type="gene ID" value="AO090012000994"/>
</dbReference>
<dbReference type="HOGENOM" id="CLU_130004_1_1_1"/>
<dbReference type="Proteomes" id="UP000006564">
    <property type="component" value="Chromosome 4"/>
</dbReference>
<dbReference type="GO" id="GO:0005634">
    <property type="term" value="C:nucleus"/>
    <property type="evidence" value="ECO:0007669"/>
    <property type="project" value="UniProtKB-SubCell"/>
</dbReference>
<dbReference type="InterPro" id="IPR019098">
    <property type="entry name" value="Histone_chaperone_domain_CHZ"/>
</dbReference>
<dbReference type="Pfam" id="PF09649">
    <property type="entry name" value="CHZ"/>
    <property type="match status" value="1"/>
</dbReference>
<dbReference type="SMART" id="SM01082">
    <property type="entry name" value="CHZ"/>
    <property type="match status" value="1"/>
</dbReference>